<dbReference type="EMBL" id="AK006478">
    <property type="protein sequence ID" value="BAB24608.1"/>
    <property type="molecule type" value="mRNA"/>
</dbReference>
<dbReference type="EMBL" id="AK008537">
    <property type="protein sequence ID" value="BAB25729.1"/>
    <property type="molecule type" value="mRNA"/>
</dbReference>
<dbReference type="EMBL" id="AK028049">
    <property type="protein sequence ID" value="BAC25720.1"/>
    <property type="molecule type" value="mRNA"/>
</dbReference>
<dbReference type="EMBL" id="AK136240">
    <property type="protein sequence ID" value="BAE22891.1"/>
    <property type="molecule type" value="mRNA"/>
</dbReference>
<dbReference type="EMBL" id="AK162194">
    <property type="protein sequence ID" value="BAE36783.1"/>
    <property type="molecule type" value="mRNA"/>
</dbReference>
<dbReference type="EMBL" id="BC017161">
    <property type="protein sequence ID" value="AAH17161.1"/>
    <property type="molecule type" value="mRNA"/>
</dbReference>
<dbReference type="CCDS" id="CCDS17915.1"/>
<dbReference type="RefSeq" id="NP_001343292.1">
    <property type="nucleotide sequence ID" value="NM_001356363.2"/>
</dbReference>
<dbReference type="RefSeq" id="NP_080202.1">
    <property type="nucleotide sequence ID" value="NM_025926.6"/>
</dbReference>
<dbReference type="RefSeq" id="NP_081563.2">
    <property type="nucleotide sequence ID" value="NM_027287.6"/>
</dbReference>
<dbReference type="RefSeq" id="XP_006501983.1">
    <property type="nucleotide sequence ID" value="XM_006501920.3"/>
</dbReference>
<dbReference type="RefSeq" id="XP_036019130.1">
    <property type="nucleotide sequence ID" value="XM_036163237.1"/>
</dbReference>
<dbReference type="SMR" id="Q9D832"/>
<dbReference type="BioGRID" id="211889">
    <property type="interactions" value="18"/>
</dbReference>
<dbReference type="FunCoup" id="Q9D832">
    <property type="interactions" value="2451"/>
</dbReference>
<dbReference type="IntAct" id="Q9D832">
    <property type="interactions" value="3"/>
</dbReference>
<dbReference type="MINT" id="Q9D832"/>
<dbReference type="STRING" id="10090.ENSMUSP00000053916"/>
<dbReference type="iPTMnet" id="Q9D832"/>
<dbReference type="PhosphoSitePlus" id="Q9D832"/>
<dbReference type="SwissPalm" id="Q9D832"/>
<dbReference type="jPOST" id="Q9D832"/>
<dbReference type="PaxDb" id="10090-ENSMUSP00000114356"/>
<dbReference type="PeptideAtlas" id="Q9D832"/>
<dbReference type="ProteomicsDB" id="277350"/>
<dbReference type="Antibodypedia" id="33498">
    <property type="antibodies" value="269 antibodies from 31 providers"/>
</dbReference>
<dbReference type="DNASU" id="67035"/>
<dbReference type="Ensembl" id="ENSMUST00000029669.4">
    <property type="protein sequence ID" value="ENSMUSP00000029669.4"/>
    <property type="gene ID" value="ENSMUSG00000028035.14"/>
</dbReference>
<dbReference type="Ensembl" id="ENSMUST00000050073.13">
    <property type="protein sequence ID" value="ENSMUSP00000053916.7"/>
    <property type="gene ID" value="ENSMUSG00000028035.14"/>
</dbReference>
<dbReference type="Ensembl" id="ENSMUST00000144950.8">
    <property type="protein sequence ID" value="ENSMUSP00000114356.2"/>
    <property type="gene ID" value="ENSMUSG00000028035.14"/>
</dbReference>
<dbReference type="GeneID" id="67035"/>
<dbReference type="KEGG" id="mmu:67035"/>
<dbReference type="UCSC" id="uc008rsq.3">
    <property type="organism name" value="mouse"/>
</dbReference>
<dbReference type="AGR" id="MGI:1914285"/>
<dbReference type="CTD" id="11080"/>
<dbReference type="MGI" id="MGI:1914285">
    <property type="gene designation" value="Dnajb4"/>
</dbReference>
<dbReference type="VEuPathDB" id="HostDB:ENSMUSG00000028035"/>
<dbReference type="eggNOG" id="KOG0714">
    <property type="taxonomic scope" value="Eukaryota"/>
</dbReference>
<dbReference type="GeneTree" id="ENSGT00940000156826"/>
<dbReference type="HOGENOM" id="CLU_017633_0_0_1"/>
<dbReference type="InParanoid" id="Q9D832"/>
<dbReference type="OMA" id="MPIRKEG"/>
<dbReference type="OrthoDB" id="550424at2759"/>
<dbReference type="PhylomeDB" id="Q9D832"/>
<dbReference type="TreeFam" id="TF105141"/>
<dbReference type="BioGRID-ORCS" id="67035">
    <property type="hits" value="2 hits in 76 CRISPR screens"/>
</dbReference>
<dbReference type="CD-CODE" id="CE726F99">
    <property type="entry name" value="Postsynaptic density"/>
</dbReference>
<dbReference type="ChiTaRS" id="Dnajb4">
    <property type="organism name" value="mouse"/>
</dbReference>
<dbReference type="PRO" id="PR:Q9D832"/>
<dbReference type="Proteomes" id="UP000000589">
    <property type="component" value="Chromosome 3"/>
</dbReference>
<dbReference type="RNAct" id="Q9D832">
    <property type="molecule type" value="protein"/>
</dbReference>
<dbReference type="Bgee" id="ENSMUSG00000028035">
    <property type="expression patterns" value="Expressed in ascending aorta and 253 other cell types or tissues"/>
</dbReference>
<dbReference type="ExpressionAtlas" id="Q9D832">
    <property type="expression patterns" value="baseline and differential"/>
</dbReference>
<dbReference type="GO" id="GO:0005829">
    <property type="term" value="C:cytosol"/>
    <property type="evidence" value="ECO:0007669"/>
    <property type="project" value="Ensembl"/>
</dbReference>
<dbReference type="GO" id="GO:0005654">
    <property type="term" value="C:nucleoplasm"/>
    <property type="evidence" value="ECO:0007669"/>
    <property type="project" value="Ensembl"/>
</dbReference>
<dbReference type="GO" id="GO:0005886">
    <property type="term" value="C:plasma membrane"/>
    <property type="evidence" value="ECO:0007669"/>
    <property type="project" value="UniProtKB-SubCell"/>
</dbReference>
<dbReference type="GO" id="GO:0030018">
    <property type="term" value="C:Z disc"/>
    <property type="evidence" value="ECO:0000250"/>
    <property type="project" value="UniProtKB"/>
</dbReference>
<dbReference type="GO" id="GO:0001671">
    <property type="term" value="F:ATPase activator activity"/>
    <property type="evidence" value="ECO:0000250"/>
    <property type="project" value="UniProtKB"/>
</dbReference>
<dbReference type="GO" id="GO:0051087">
    <property type="term" value="F:protein-folding chaperone binding"/>
    <property type="evidence" value="ECO:0007669"/>
    <property type="project" value="Ensembl"/>
</dbReference>
<dbReference type="GO" id="GO:0051082">
    <property type="term" value="F:unfolded protein binding"/>
    <property type="evidence" value="ECO:0007669"/>
    <property type="project" value="InterPro"/>
</dbReference>
<dbReference type="GO" id="GO:0006457">
    <property type="term" value="P:protein folding"/>
    <property type="evidence" value="ECO:0007669"/>
    <property type="project" value="InterPro"/>
</dbReference>
<dbReference type="CDD" id="cd06257">
    <property type="entry name" value="DnaJ"/>
    <property type="match status" value="1"/>
</dbReference>
<dbReference type="CDD" id="cd10747">
    <property type="entry name" value="DnaJ_C"/>
    <property type="match status" value="1"/>
</dbReference>
<dbReference type="FunFam" id="1.10.287.110:FF:000005">
    <property type="entry name" value="DnaJ (Hsp40) homolog, subfamily B, member 4"/>
    <property type="match status" value="1"/>
</dbReference>
<dbReference type="FunFam" id="2.60.260.20:FF:000002">
    <property type="entry name" value="Dnaj homolog subfamily b member"/>
    <property type="match status" value="1"/>
</dbReference>
<dbReference type="FunFam" id="2.60.260.20:FF:000007">
    <property type="entry name" value="dnaJ homolog subfamily B member 5"/>
    <property type="match status" value="1"/>
</dbReference>
<dbReference type="Gene3D" id="1.10.287.110">
    <property type="entry name" value="DnaJ domain"/>
    <property type="match status" value="1"/>
</dbReference>
<dbReference type="Gene3D" id="2.60.260.20">
    <property type="entry name" value="Urease metallochaperone UreE, N-terminal domain"/>
    <property type="match status" value="2"/>
</dbReference>
<dbReference type="InterPro" id="IPR002939">
    <property type="entry name" value="DnaJ_C"/>
</dbReference>
<dbReference type="InterPro" id="IPR001623">
    <property type="entry name" value="DnaJ_domain"/>
</dbReference>
<dbReference type="InterPro" id="IPR018253">
    <property type="entry name" value="DnaJ_domain_CS"/>
</dbReference>
<dbReference type="InterPro" id="IPR051339">
    <property type="entry name" value="DnaJ_subfamily_B"/>
</dbReference>
<dbReference type="InterPro" id="IPR008971">
    <property type="entry name" value="HSP40/DnaJ_pept-bd"/>
</dbReference>
<dbReference type="InterPro" id="IPR036869">
    <property type="entry name" value="J_dom_sf"/>
</dbReference>
<dbReference type="PANTHER" id="PTHR24078:SF288">
    <property type="entry name" value="DNAJ HOMOLOG SUBFAMILY B MEMBER 4"/>
    <property type="match status" value="1"/>
</dbReference>
<dbReference type="PANTHER" id="PTHR24078">
    <property type="entry name" value="DNAJ HOMOLOG SUBFAMILY C MEMBER"/>
    <property type="match status" value="1"/>
</dbReference>
<dbReference type="Pfam" id="PF00226">
    <property type="entry name" value="DnaJ"/>
    <property type="match status" value="1"/>
</dbReference>
<dbReference type="Pfam" id="PF01556">
    <property type="entry name" value="DnaJ_C"/>
    <property type="match status" value="1"/>
</dbReference>
<dbReference type="PRINTS" id="PR00625">
    <property type="entry name" value="JDOMAIN"/>
</dbReference>
<dbReference type="SMART" id="SM00271">
    <property type="entry name" value="DnaJ"/>
    <property type="match status" value="1"/>
</dbReference>
<dbReference type="SUPFAM" id="SSF46565">
    <property type="entry name" value="Chaperone J-domain"/>
    <property type="match status" value="1"/>
</dbReference>
<dbReference type="SUPFAM" id="SSF49493">
    <property type="entry name" value="HSP40/DnaJ peptide-binding domain"/>
    <property type="match status" value="2"/>
</dbReference>
<dbReference type="PROSITE" id="PS00636">
    <property type="entry name" value="DNAJ_1"/>
    <property type="match status" value="1"/>
</dbReference>
<dbReference type="PROSITE" id="PS50076">
    <property type="entry name" value="DNAJ_2"/>
    <property type="match status" value="1"/>
</dbReference>
<feature type="chain" id="PRO_0000071022" description="DnaJ homolog subfamily B member 4">
    <location>
        <begin position="1"/>
        <end position="337"/>
    </location>
</feature>
<feature type="domain" description="J" evidence="2">
    <location>
        <begin position="4"/>
        <end position="68"/>
    </location>
</feature>
<feature type="modified residue" description="Phosphoserine" evidence="1">
    <location>
        <position position="122"/>
    </location>
</feature>
<feature type="modified residue" description="Phosphoserine" evidence="1">
    <location>
        <position position="148"/>
    </location>
</feature>
<feature type="sequence conflict" description="In Ref. 1; BAB24608." evidence="4" ref="1">
    <original>Q</original>
    <variation>L</variation>
    <location>
        <position position="66"/>
    </location>
</feature>
<feature type="sequence conflict" description="In Ref. 1; BAB24608." evidence="4" ref="1">
    <original>P</original>
    <variation>T</variation>
    <location>
        <position position="151"/>
    </location>
</feature>
<feature type="sequence conflict" description="In Ref. 1; BAB24608." evidence="4" ref="1">
    <original>I</original>
    <variation>S</variation>
    <location>
        <position position="329"/>
    </location>
</feature>
<proteinExistence type="evidence at protein level"/>
<reference key="1">
    <citation type="journal article" date="2005" name="Science">
        <title>The transcriptional landscape of the mammalian genome.</title>
        <authorList>
            <person name="Carninci P."/>
            <person name="Kasukawa T."/>
            <person name="Katayama S."/>
            <person name="Gough J."/>
            <person name="Frith M.C."/>
            <person name="Maeda N."/>
            <person name="Oyama R."/>
            <person name="Ravasi T."/>
            <person name="Lenhard B."/>
            <person name="Wells C."/>
            <person name="Kodzius R."/>
            <person name="Shimokawa K."/>
            <person name="Bajic V.B."/>
            <person name="Brenner S.E."/>
            <person name="Batalov S."/>
            <person name="Forrest A.R."/>
            <person name="Zavolan M."/>
            <person name="Davis M.J."/>
            <person name="Wilming L.G."/>
            <person name="Aidinis V."/>
            <person name="Allen J.E."/>
            <person name="Ambesi-Impiombato A."/>
            <person name="Apweiler R."/>
            <person name="Aturaliya R.N."/>
            <person name="Bailey T.L."/>
            <person name="Bansal M."/>
            <person name="Baxter L."/>
            <person name="Beisel K.W."/>
            <person name="Bersano T."/>
            <person name="Bono H."/>
            <person name="Chalk A.M."/>
            <person name="Chiu K.P."/>
            <person name="Choudhary V."/>
            <person name="Christoffels A."/>
            <person name="Clutterbuck D.R."/>
            <person name="Crowe M.L."/>
            <person name="Dalla E."/>
            <person name="Dalrymple B.P."/>
            <person name="de Bono B."/>
            <person name="Della Gatta G."/>
            <person name="di Bernardo D."/>
            <person name="Down T."/>
            <person name="Engstrom P."/>
            <person name="Fagiolini M."/>
            <person name="Faulkner G."/>
            <person name="Fletcher C.F."/>
            <person name="Fukushima T."/>
            <person name="Furuno M."/>
            <person name="Futaki S."/>
            <person name="Gariboldi M."/>
            <person name="Georgii-Hemming P."/>
            <person name="Gingeras T.R."/>
            <person name="Gojobori T."/>
            <person name="Green R.E."/>
            <person name="Gustincich S."/>
            <person name="Harbers M."/>
            <person name="Hayashi Y."/>
            <person name="Hensch T.K."/>
            <person name="Hirokawa N."/>
            <person name="Hill D."/>
            <person name="Huminiecki L."/>
            <person name="Iacono M."/>
            <person name="Ikeo K."/>
            <person name="Iwama A."/>
            <person name="Ishikawa T."/>
            <person name="Jakt M."/>
            <person name="Kanapin A."/>
            <person name="Katoh M."/>
            <person name="Kawasawa Y."/>
            <person name="Kelso J."/>
            <person name="Kitamura H."/>
            <person name="Kitano H."/>
            <person name="Kollias G."/>
            <person name="Krishnan S.P."/>
            <person name="Kruger A."/>
            <person name="Kummerfeld S.K."/>
            <person name="Kurochkin I.V."/>
            <person name="Lareau L.F."/>
            <person name="Lazarevic D."/>
            <person name="Lipovich L."/>
            <person name="Liu J."/>
            <person name="Liuni S."/>
            <person name="McWilliam S."/>
            <person name="Madan Babu M."/>
            <person name="Madera M."/>
            <person name="Marchionni L."/>
            <person name="Matsuda H."/>
            <person name="Matsuzawa S."/>
            <person name="Miki H."/>
            <person name="Mignone F."/>
            <person name="Miyake S."/>
            <person name="Morris K."/>
            <person name="Mottagui-Tabar S."/>
            <person name="Mulder N."/>
            <person name="Nakano N."/>
            <person name="Nakauchi H."/>
            <person name="Ng P."/>
            <person name="Nilsson R."/>
            <person name="Nishiguchi S."/>
            <person name="Nishikawa S."/>
            <person name="Nori F."/>
            <person name="Ohara O."/>
            <person name="Okazaki Y."/>
            <person name="Orlando V."/>
            <person name="Pang K.C."/>
            <person name="Pavan W.J."/>
            <person name="Pavesi G."/>
            <person name="Pesole G."/>
            <person name="Petrovsky N."/>
            <person name="Piazza S."/>
            <person name="Reed J."/>
            <person name="Reid J.F."/>
            <person name="Ring B.Z."/>
            <person name="Ringwald M."/>
            <person name="Rost B."/>
            <person name="Ruan Y."/>
            <person name="Salzberg S.L."/>
            <person name="Sandelin A."/>
            <person name="Schneider C."/>
            <person name="Schoenbach C."/>
            <person name="Sekiguchi K."/>
            <person name="Semple C.A."/>
            <person name="Seno S."/>
            <person name="Sessa L."/>
            <person name="Sheng Y."/>
            <person name="Shibata Y."/>
            <person name="Shimada H."/>
            <person name="Shimada K."/>
            <person name="Silva D."/>
            <person name="Sinclair B."/>
            <person name="Sperling S."/>
            <person name="Stupka E."/>
            <person name="Sugiura K."/>
            <person name="Sultana R."/>
            <person name="Takenaka Y."/>
            <person name="Taki K."/>
            <person name="Tammoja K."/>
            <person name="Tan S.L."/>
            <person name="Tang S."/>
            <person name="Taylor M.S."/>
            <person name="Tegner J."/>
            <person name="Teichmann S.A."/>
            <person name="Ueda H.R."/>
            <person name="van Nimwegen E."/>
            <person name="Verardo R."/>
            <person name="Wei C.L."/>
            <person name="Yagi K."/>
            <person name="Yamanishi H."/>
            <person name="Zabarovsky E."/>
            <person name="Zhu S."/>
            <person name="Zimmer A."/>
            <person name="Hide W."/>
            <person name="Bult C."/>
            <person name="Grimmond S.M."/>
            <person name="Teasdale R.D."/>
            <person name="Liu E.T."/>
            <person name="Brusic V."/>
            <person name="Quackenbush J."/>
            <person name="Wahlestedt C."/>
            <person name="Mattick J.S."/>
            <person name="Hume D.A."/>
            <person name="Kai C."/>
            <person name="Sasaki D."/>
            <person name="Tomaru Y."/>
            <person name="Fukuda S."/>
            <person name="Kanamori-Katayama M."/>
            <person name="Suzuki M."/>
            <person name="Aoki J."/>
            <person name="Arakawa T."/>
            <person name="Iida J."/>
            <person name="Imamura K."/>
            <person name="Itoh M."/>
            <person name="Kato T."/>
            <person name="Kawaji H."/>
            <person name="Kawagashira N."/>
            <person name="Kawashima T."/>
            <person name="Kojima M."/>
            <person name="Kondo S."/>
            <person name="Konno H."/>
            <person name="Nakano K."/>
            <person name="Ninomiya N."/>
            <person name="Nishio T."/>
            <person name="Okada M."/>
            <person name="Plessy C."/>
            <person name="Shibata K."/>
            <person name="Shiraki T."/>
            <person name="Suzuki S."/>
            <person name="Tagami M."/>
            <person name="Waki K."/>
            <person name="Watahiki A."/>
            <person name="Okamura-Oho Y."/>
            <person name="Suzuki H."/>
            <person name="Kawai J."/>
            <person name="Hayashizaki Y."/>
        </authorList>
    </citation>
    <scope>NUCLEOTIDE SEQUENCE [LARGE SCALE MRNA]</scope>
    <source>
        <strain>C57BL/6J</strain>
        <tissue>Cerebellum</tissue>
        <tissue>Egg</tissue>
        <tissue>Small intestine</tissue>
        <tissue>Testis</tissue>
    </source>
</reference>
<reference key="2">
    <citation type="journal article" date="2004" name="Genome Res.">
        <title>The status, quality, and expansion of the NIH full-length cDNA project: the Mammalian Gene Collection (MGC).</title>
        <authorList>
            <consortium name="The MGC Project Team"/>
        </authorList>
    </citation>
    <scope>NUCLEOTIDE SEQUENCE [LARGE SCALE MRNA]</scope>
    <source>
        <tissue>Eye</tissue>
    </source>
</reference>
<reference key="3">
    <citation type="journal article" date="2010" name="Cell">
        <title>A tissue-specific atlas of mouse protein phosphorylation and expression.</title>
        <authorList>
            <person name="Huttlin E.L."/>
            <person name="Jedrychowski M.P."/>
            <person name="Elias J.E."/>
            <person name="Goswami T."/>
            <person name="Rad R."/>
            <person name="Beausoleil S.A."/>
            <person name="Villen J."/>
            <person name="Haas W."/>
            <person name="Sowa M.E."/>
            <person name="Gygi S.P."/>
        </authorList>
    </citation>
    <scope>IDENTIFICATION BY MASS SPECTROMETRY [LARGE SCALE ANALYSIS]</scope>
    <source>
        <tissue>Brain</tissue>
        <tissue>Brown adipose tissue</tissue>
        <tissue>Heart</tissue>
        <tissue>Kidney</tissue>
        <tissue>Lung</tissue>
        <tissue>Pancreas</tissue>
        <tissue>Spleen</tissue>
        <tissue>Testis</tissue>
    </source>
</reference>
<reference key="4">
    <citation type="journal article" date="2023" name="Acta Neuropathol.">
        <title>Loss of function variants in DNAJB4 cause a myopathy with early respiratory failure.</title>
        <authorList>
            <person name="Weihl C.C."/>
            <person name="Toepf A."/>
            <person name="Bengoechea R."/>
            <person name="Duff J."/>
            <person name="Charlton R."/>
            <person name="Garcia S.K."/>
            <person name="Dominguez-Gonzalez C."/>
            <person name="Alsaman A."/>
            <person name="Hernandez-Lain A."/>
            <person name="Franco L.V."/>
            <person name="Sanchez M.E.P."/>
            <person name="Beecroft S.J."/>
            <person name="Goullee H."/>
            <person name="Daw J."/>
            <person name="Bhadra A."/>
            <person name="True H."/>
            <person name="Inoue M."/>
            <person name="Findlay A.R."/>
            <person name="Laing N."/>
            <person name="Olive M."/>
            <person name="Ravenscroft G."/>
            <person name="Straub V."/>
        </authorList>
    </citation>
    <scope>DISRUPTION PHENOTYPE</scope>
</reference>
<gene>
    <name type="primary">Dnajb4</name>
</gene>
<protein>
    <recommendedName>
        <fullName>DnaJ homolog subfamily B member 4</fullName>
    </recommendedName>
</protein>
<organism>
    <name type="scientific">Mus musculus</name>
    <name type="common">Mouse</name>
    <dbReference type="NCBI Taxonomy" id="10090"/>
    <lineage>
        <taxon>Eukaryota</taxon>
        <taxon>Metazoa</taxon>
        <taxon>Chordata</taxon>
        <taxon>Craniata</taxon>
        <taxon>Vertebrata</taxon>
        <taxon>Euteleostomi</taxon>
        <taxon>Mammalia</taxon>
        <taxon>Eutheria</taxon>
        <taxon>Euarchontoglires</taxon>
        <taxon>Glires</taxon>
        <taxon>Rodentia</taxon>
        <taxon>Myomorpha</taxon>
        <taxon>Muroidea</taxon>
        <taxon>Muridae</taxon>
        <taxon>Murinae</taxon>
        <taxon>Mus</taxon>
        <taxon>Mus</taxon>
    </lineage>
</organism>
<comment type="function">
    <text evidence="1">Probable chaperone. Stimulates ATP hydrolysis and the folding of unfolded proteins mediated by HSPA1A/B (in vitro).</text>
</comment>
<comment type="subunit">
    <text evidence="1">Homodimer. The C-terminal section interacts with the C-terminal tail of OPRM1. Also interacts with SDIM1 (By similarity).</text>
</comment>
<comment type="subcellular location">
    <subcellularLocation>
        <location evidence="1">Cytoplasm</location>
    </subcellularLocation>
    <subcellularLocation>
        <location evidence="1">Cell membrane</location>
    </subcellularLocation>
    <subcellularLocation>
        <location evidence="1">Cytoplasm</location>
        <location evidence="1">Myofibril</location>
        <location evidence="1">Sarcomere</location>
        <location evidence="1">Z line</location>
    </subcellularLocation>
</comment>
<comment type="disruption phenotype">
    <text evidence="3">Knockout animals show muscle weakness and fiber atrophy with prominent diaphragm involvement and kyphosis. Knockout muscle and myotubes have myofibrillar disorganization and accumulated Z-disk proteins and protein chaperones.</text>
</comment>
<accession>Q9D832</accession>
<accession>Q3TS92</accession>
<accession>Q9D9U2</accession>
<keyword id="KW-1003">Cell membrane</keyword>
<keyword id="KW-0143">Chaperone</keyword>
<keyword id="KW-0963">Cytoplasm</keyword>
<keyword id="KW-0472">Membrane</keyword>
<keyword id="KW-0597">Phosphoprotein</keyword>
<keyword id="KW-1185">Reference proteome</keyword>
<name>DNJB4_MOUSE</name>
<sequence>MGKDYYHILGIDKGATDEDVKKAYRKQALKFHPDKNKSPQAEEKFKEVAEAYEVLSDPKKREIYDQFGEEGLKGGAGGTDGQGGTFRYTFHGDPHATFAAFFGGSNPFEIFFGRRMGGGRDSEEMEIDGDPFSAFGFSMNGYPRDRNSVGPSRLKQDPPIIHELKVSLEEIYSGCTKRMKISRKRLNPDGRSYRSEDKILTIEIKKGWKEGTKITFPREGDETPNSIPADIVFVIKDKEHPKFKRDGSNIVYTAKISLREALCGCSLNVPTMDGRNLPMSVTDIVKPGMRRRVIGYGLPFPKNPDQRGDLLIEFDVSFPDVISAASKEILRKHLPAS</sequence>
<evidence type="ECO:0000250" key="1">
    <source>
        <dbReference type="UniProtKB" id="Q9UDY4"/>
    </source>
</evidence>
<evidence type="ECO:0000255" key="2">
    <source>
        <dbReference type="PROSITE-ProRule" id="PRU00286"/>
    </source>
</evidence>
<evidence type="ECO:0000269" key="3">
    <source>
    </source>
</evidence>
<evidence type="ECO:0000305" key="4"/>